<sequence>MSDGSRTALSKSTFHFAAGLGSGVLSAVLLQPIDLLKTRVQQSGAHSLSAAIADIRAAPRLLPALWRGAVPSALRTGFGSAIYFTSLNAIRQSAARISPLPSSSSSTTTSSSTTTSSSSSSLPKLSNTSNLLAGAAARSLAGLILMPLTVLKVRYESTLYNYTSLASAARDIAAHEGARGFFAGYGATAVRDAPYAGLYVLFYEQGKKRLSQLFPTTTTTTTTNSTQNGPMGLQHAASINFASGVLAGVICSVVSNPFDAVKTRIQLQPGRYRNMVSGARRMVGEEGVRALWDGLALRMSRKAVSSALAWTVYEELIRRAEAGWRAGAARERL</sequence>
<comment type="function">
    <text evidence="2">Mitochondrial glycine transporter that imports glycine into the mitochondrial matrix. Plays an important role in providing glycine for the first enzymatic step in heme biosynthesis, the condensation of glycine with succinyl-CoA to produce 5-aminolevulinate (ALA) in the mitochondrial matrix.</text>
</comment>
<comment type="catalytic activity">
    <reaction evidence="1">
        <text>glycine(in) = glycine(out)</text>
        <dbReference type="Rhea" id="RHEA:70715"/>
        <dbReference type="ChEBI" id="CHEBI:57305"/>
    </reaction>
</comment>
<comment type="subcellular location">
    <subcellularLocation>
        <location evidence="2">Mitochondrion inner membrane</location>
        <topology evidence="2">Multi-pass membrane protein</topology>
    </subcellularLocation>
</comment>
<comment type="similarity">
    <text evidence="2">Belongs to the mitochondrial carrier (TC 2.A.29) family. SLC25A38 subfamily.</text>
</comment>
<organism>
    <name type="scientific">Chaetomium globosum (strain ATCC 6205 / CBS 148.51 / DSM 1962 / NBRC 6347 / NRRL 1970)</name>
    <name type="common">Soil fungus</name>
    <dbReference type="NCBI Taxonomy" id="306901"/>
    <lineage>
        <taxon>Eukaryota</taxon>
        <taxon>Fungi</taxon>
        <taxon>Dikarya</taxon>
        <taxon>Ascomycota</taxon>
        <taxon>Pezizomycotina</taxon>
        <taxon>Sordariomycetes</taxon>
        <taxon>Sordariomycetidae</taxon>
        <taxon>Sordariales</taxon>
        <taxon>Chaetomiaceae</taxon>
        <taxon>Chaetomium</taxon>
    </lineage>
</organism>
<feature type="chain" id="PRO_0000378933" description="Mitochondrial glycine transporter">
    <location>
        <begin position="1"/>
        <end position="333"/>
    </location>
</feature>
<feature type="transmembrane region" description="Helical; Name=1" evidence="2">
    <location>
        <begin position="16"/>
        <end position="41"/>
    </location>
</feature>
<feature type="transmembrane region" description="Helical; Name=2" evidence="2">
    <location>
        <begin position="68"/>
        <end position="94"/>
    </location>
</feature>
<feature type="transmembrane region" description="Helical; Name=3" evidence="2">
    <location>
        <begin position="131"/>
        <end position="156"/>
    </location>
</feature>
<feature type="transmembrane region" description="Helical; Name=4" evidence="2">
    <location>
        <begin position="184"/>
        <end position="207"/>
    </location>
</feature>
<feature type="transmembrane region" description="Helical; Name=5" evidence="2">
    <location>
        <begin position="239"/>
        <end position="265"/>
    </location>
</feature>
<feature type="transmembrane region" description="Helical; Name=6" evidence="2">
    <location>
        <begin position="294"/>
        <end position="312"/>
    </location>
</feature>
<feature type="repeat" description="Solcar 1" evidence="2">
    <location>
        <begin position="10"/>
        <end position="93"/>
    </location>
</feature>
<feature type="repeat" description="Solcar 2" evidence="2">
    <location>
        <begin position="125"/>
        <end position="209"/>
    </location>
</feature>
<feature type="repeat" description="Solcar 3" evidence="2">
    <location>
        <begin position="235"/>
        <end position="319"/>
    </location>
</feature>
<feature type="region of interest" description="Disordered" evidence="3">
    <location>
        <begin position="98"/>
        <end position="126"/>
    </location>
</feature>
<dbReference type="EMBL" id="CH408031">
    <property type="protein sequence ID" value="EAQ89288.1"/>
    <property type="molecule type" value="Genomic_DNA"/>
</dbReference>
<dbReference type="RefSeq" id="XP_001222002.1">
    <property type="nucleotide sequence ID" value="XM_001222001.1"/>
</dbReference>
<dbReference type="SMR" id="Q2H608"/>
<dbReference type="FunCoup" id="Q2H608">
    <property type="interactions" value="92"/>
</dbReference>
<dbReference type="STRING" id="306901.Q2H608"/>
<dbReference type="GeneID" id="4391050"/>
<dbReference type="VEuPathDB" id="FungiDB:CHGG_05907"/>
<dbReference type="eggNOG" id="KOG0766">
    <property type="taxonomic scope" value="Eukaryota"/>
</dbReference>
<dbReference type="HOGENOM" id="CLU_015166_0_3_1"/>
<dbReference type="InParanoid" id="Q2H608"/>
<dbReference type="OMA" id="WGIYEEL"/>
<dbReference type="OrthoDB" id="1924968at2759"/>
<dbReference type="Proteomes" id="UP000001056">
    <property type="component" value="Unassembled WGS sequence"/>
</dbReference>
<dbReference type="GO" id="GO:0005743">
    <property type="term" value="C:mitochondrial inner membrane"/>
    <property type="evidence" value="ECO:0007669"/>
    <property type="project" value="UniProtKB-SubCell"/>
</dbReference>
<dbReference type="GO" id="GO:0015187">
    <property type="term" value="F:glycine transmembrane transporter activity"/>
    <property type="evidence" value="ECO:0007669"/>
    <property type="project" value="UniProtKB-UniRule"/>
</dbReference>
<dbReference type="GO" id="GO:1904983">
    <property type="term" value="P:glycine import into mitochondrion"/>
    <property type="evidence" value="ECO:0007669"/>
    <property type="project" value="UniProtKB-UniRule"/>
</dbReference>
<dbReference type="GO" id="GO:0006783">
    <property type="term" value="P:heme biosynthetic process"/>
    <property type="evidence" value="ECO:0007669"/>
    <property type="project" value="EnsemblFungi"/>
</dbReference>
<dbReference type="Gene3D" id="1.50.40.10">
    <property type="entry name" value="Mitochondrial carrier domain"/>
    <property type="match status" value="2"/>
</dbReference>
<dbReference type="HAMAP" id="MF_03064">
    <property type="entry name" value="SLC25A38"/>
    <property type="match status" value="1"/>
</dbReference>
<dbReference type="InterPro" id="IPR030847">
    <property type="entry name" value="Hem25/SLC25A38"/>
</dbReference>
<dbReference type="InterPro" id="IPR018108">
    <property type="entry name" value="Mitochondrial_sb/sol_carrier"/>
</dbReference>
<dbReference type="InterPro" id="IPR023395">
    <property type="entry name" value="Mt_carrier_dom_sf"/>
</dbReference>
<dbReference type="PANTHER" id="PTHR46181">
    <property type="entry name" value="MITOCHONDRIAL GLYCINE TRANSPORTER"/>
    <property type="match status" value="1"/>
</dbReference>
<dbReference type="PANTHER" id="PTHR46181:SF3">
    <property type="entry name" value="MITOCHONDRIAL GLYCINE TRANSPORTER"/>
    <property type="match status" value="1"/>
</dbReference>
<dbReference type="Pfam" id="PF00153">
    <property type="entry name" value="Mito_carr"/>
    <property type="match status" value="3"/>
</dbReference>
<dbReference type="SUPFAM" id="SSF103506">
    <property type="entry name" value="Mitochondrial carrier"/>
    <property type="match status" value="1"/>
</dbReference>
<dbReference type="PROSITE" id="PS50920">
    <property type="entry name" value="SOLCAR"/>
    <property type="match status" value="3"/>
</dbReference>
<name>S2538_CHAGB</name>
<keyword id="KW-0472">Membrane</keyword>
<keyword id="KW-0496">Mitochondrion</keyword>
<keyword id="KW-0999">Mitochondrion inner membrane</keyword>
<keyword id="KW-1185">Reference proteome</keyword>
<keyword id="KW-0677">Repeat</keyword>
<keyword id="KW-0812">Transmembrane</keyword>
<keyword id="KW-1133">Transmembrane helix</keyword>
<keyword id="KW-0813">Transport</keyword>
<reference key="1">
    <citation type="journal article" date="2015" name="Genome Announc.">
        <title>Draft genome sequence of the cellulolytic fungus Chaetomium globosum.</title>
        <authorList>
            <person name="Cuomo C.A."/>
            <person name="Untereiner W.A."/>
            <person name="Ma L.-J."/>
            <person name="Grabherr M."/>
            <person name="Birren B.W."/>
        </authorList>
    </citation>
    <scope>NUCLEOTIDE SEQUENCE [LARGE SCALE GENOMIC DNA]</scope>
    <source>
        <strain>ATCC 6205 / CBS 148.51 / DSM 1962 / NBRC 6347 / NRRL 1970</strain>
    </source>
</reference>
<gene>
    <name type="ORF">CHGG_05907</name>
</gene>
<proteinExistence type="inferred from homology"/>
<accession>Q2H608</accession>
<protein>
    <recommendedName>
        <fullName evidence="2">Mitochondrial glycine transporter</fullName>
    </recommendedName>
    <alternativeName>
        <fullName evidence="2">Solute carrier family 25 member 38 homolog</fullName>
    </alternativeName>
</protein>
<evidence type="ECO:0000250" key="1">
    <source>
        <dbReference type="UniProtKB" id="Q96DW6"/>
    </source>
</evidence>
<evidence type="ECO:0000255" key="2">
    <source>
        <dbReference type="HAMAP-Rule" id="MF_03064"/>
    </source>
</evidence>
<evidence type="ECO:0000256" key="3">
    <source>
        <dbReference type="SAM" id="MobiDB-lite"/>
    </source>
</evidence>